<geneLocation type="plasmid">
    <name>pSAM2</name>
</geneLocation>
<proteinExistence type="predicted"/>
<dbReference type="EMBL" id="Z19593">
    <property type="protein sequence ID" value="CAA79645.1"/>
    <property type="molecule type" value="Genomic_DNA"/>
</dbReference>
<dbReference type="EMBL" id="AJ005260">
    <property type="protein sequence ID" value="CAA06449.1"/>
    <property type="molecule type" value="Genomic_DNA"/>
</dbReference>
<dbReference type="PIR" id="B48652">
    <property type="entry name" value="B48652"/>
</dbReference>
<dbReference type="SMR" id="Q07197"/>
<dbReference type="GO" id="GO:0005524">
    <property type="term" value="F:ATP binding"/>
    <property type="evidence" value="ECO:0007669"/>
    <property type="project" value="UniProtKB-KW"/>
</dbReference>
<dbReference type="GO" id="GO:0003677">
    <property type="term" value="F:DNA binding"/>
    <property type="evidence" value="ECO:0007669"/>
    <property type="project" value="InterPro"/>
</dbReference>
<dbReference type="Gene3D" id="3.40.50.300">
    <property type="entry name" value="P-loop containing nucleotide triphosphate hydrolases"/>
    <property type="match status" value="1"/>
</dbReference>
<dbReference type="InterPro" id="IPR050206">
    <property type="entry name" value="FtsK/SpoIIIE/SftA"/>
</dbReference>
<dbReference type="InterPro" id="IPR002543">
    <property type="entry name" value="FtsK_dom"/>
</dbReference>
<dbReference type="InterPro" id="IPR027417">
    <property type="entry name" value="P-loop_NTPase"/>
</dbReference>
<dbReference type="PANTHER" id="PTHR22683:SF41">
    <property type="entry name" value="DNA TRANSLOCASE FTSK"/>
    <property type="match status" value="1"/>
</dbReference>
<dbReference type="PANTHER" id="PTHR22683">
    <property type="entry name" value="SPORULATION PROTEIN RELATED"/>
    <property type="match status" value="1"/>
</dbReference>
<dbReference type="Pfam" id="PF01580">
    <property type="entry name" value="FtsK_SpoIIIE"/>
    <property type="match status" value="1"/>
</dbReference>
<dbReference type="SUPFAM" id="SSF52540">
    <property type="entry name" value="P-loop containing nucleoside triphosphate hydrolases"/>
    <property type="match status" value="1"/>
</dbReference>
<dbReference type="PROSITE" id="PS50901">
    <property type="entry name" value="FTSK"/>
    <property type="match status" value="1"/>
</dbReference>
<gene>
    <name type="primary">traSA</name>
</gene>
<keyword id="KW-0067">ATP-binding</keyword>
<keyword id="KW-0547">Nucleotide-binding</keyword>
<keyword id="KW-0614">Plasmid</keyword>
<sequence length="415" mass="45263">MRVLVRYASVMEACGLTVPPSRWRLALARMANRPAPESRPPRILRLRPTRTGLVLRLKLRPGQDAFDVAATTDRLRHSFGVYGVTSRELRSGVVEVRMTGYDVLQRVQMPATAETRPMRIPVALREDGAVHYRDYRAVPHGLTLGATESGKSVYQRNLVAGLAPHHVALVGIDCKQGVELFPLARRFSALADNPDTALDLLEALVGHMEDVYQLIRAEQRISVAVPDAEIAADIWDLREDLRPVPVVVLVDEVAELALFATKDEEKRRDRIITALVRLAQLGRAAGIYLEICGQRFGSELGKGITMLRAQLTGRTAHRVNDETSANMAFGDVSPDAVLAAIQIPTDTPGVAVTGDSTGGWARIRAPHTTLREAVNICNKHADRTPDVPALAAFRPALAPLPQARVPLSKTAPATA</sequence>
<feature type="chain" id="PRO_0000098328" description="Transfer protein TraSA">
    <location>
        <begin position="1"/>
        <end position="415"/>
    </location>
</feature>
<feature type="domain" description="FtsK" evidence="1">
    <location>
        <begin position="127"/>
        <end position="326"/>
    </location>
</feature>
<feature type="binding site" evidence="1">
    <location>
        <begin position="145"/>
        <end position="152"/>
    </location>
    <ligand>
        <name>ATP</name>
        <dbReference type="ChEBI" id="CHEBI:30616"/>
    </ligand>
</feature>
<name>TRSA_STRAM</name>
<organism>
    <name type="scientific">Streptomyces ambofaciens</name>
    <dbReference type="NCBI Taxonomy" id="1889"/>
    <lineage>
        <taxon>Bacteria</taxon>
        <taxon>Bacillati</taxon>
        <taxon>Actinomycetota</taxon>
        <taxon>Actinomycetes</taxon>
        <taxon>Kitasatosporales</taxon>
        <taxon>Streptomycetaceae</taxon>
        <taxon>Streptomyces</taxon>
    </lineage>
</organism>
<protein>
    <recommendedName>
        <fullName>Transfer protein TraSA</fullName>
    </recommendedName>
</protein>
<accession>Q07197</accession>
<accession>O69083</accession>
<accession>Q07199</accession>
<reference key="1">
    <citation type="journal article" date="1993" name="J. Bacteriol.">
        <title>Transfer functions of the conjugative integrating element pSAM2 from Streptomyces ambofaciens: characterization of a kil-kor system associated with transfer.</title>
        <authorList>
            <person name="Hagege J."/>
            <person name="Pernodet J.L."/>
            <person name="Sezonov G."/>
            <person name="Gerbaud C."/>
            <person name="Friedmann A."/>
            <person name="Guerineau M."/>
        </authorList>
    </citation>
    <scope>NUCLEOTIDE SEQUENCE [GENOMIC DNA]</scope>
    <source>
        <strain>ATCC 23877 / 3486 / DSM 40053 / JCM 4204 / NBRC 12836 / NRRL B-2516</strain>
    </source>
</reference>
<reference key="2">
    <citation type="submission" date="1998-04" db="EMBL/GenBank/DDBJ databases">
        <authorList>
            <person name="Sezonov G."/>
        </authorList>
    </citation>
    <scope>SEQUENCE REVISION</scope>
</reference>
<reference key="3">
    <citation type="submission" date="1998-04" db="EMBL/GenBank/DDBJ databases">
        <authorList>
            <person name="Sezonov G.V."/>
            <person name="Duchene A.M."/>
            <person name="Friedmann A."/>
            <person name="Guerineau M."/>
            <person name="Pernodet J.L."/>
        </authorList>
    </citation>
    <scope>NUCLEOTIDE SEQUENCE [GENOMIC DNA]</scope>
    <source>
        <strain>ATCC 15154 / NBRC 13685 / NRRL 2420 / Isolate B3</strain>
    </source>
</reference>
<evidence type="ECO:0000255" key="1">
    <source>
        <dbReference type="PROSITE-ProRule" id="PRU00289"/>
    </source>
</evidence>